<dbReference type="EMBL" id="AE000657">
    <property type="protein sequence ID" value="AAC06718.1"/>
    <property type="molecule type" value="Genomic_DNA"/>
</dbReference>
<dbReference type="PIR" id="B70341">
    <property type="entry name" value="B70341"/>
</dbReference>
<dbReference type="RefSeq" id="NP_213318.1">
    <property type="nucleotide sequence ID" value="NC_000918.1"/>
</dbReference>
<dbReference type="RefSeq" id="WP_010880256.1">
    <property type="nucleotide sequence ID" value="NC_000918.1"/>
</dbReference>
<dbReference type="SMR" id="O66758"/>
<dbReference type="STRING" id="224324.aq_450"/>
<dbReference type="EnsemblBacteria" id="AAC06718">
    <property type="protein sequence ID" value="AAC06718"/>
    <property type="gene ID" value="aq_450"/>
</dbReference>
<dbReference type="KEGG" id="aae:aq_450"/>
<dbReference type="PATRIC" id="fig|224324.8.peg.373"/>
<dbReference type="eggNOG" id="COG1993">
    <property type="taxonomic scope" value="Bacteria"/>
</dbReference>
<dbReference type="HOGENOM" id="CLU_146749_2_1_0"/>
<dbReference type="InParanoid" id="O66758"/>
<dbReference type="OrthoDB" id="9795599at2"/>
<dbReference type="Proteomes" id="UP000000798">
    <property type="component" value="Chromosome"/>
</dbReference>
<dbReference type="Gene3D" id="3.30.70.120">
    <property type="match status" value="1"/>
</dbReference>
<dbReference type="InterPro" id="IPR011322">
    <property type="entry name" value="N-reg_PII-like_a/b"/>
</dbReference>
<dbReference type="InterPro" id="IPR015867">
    <property type="entry name" value="N-reg_PII/ATP_PRibTrfase_C"/>
</dbReference>
<dbReference type="InterPro" id="IPR003793">
    <property type="entry name" value="UPF0166"/>
</dbReference>
<dbReference type="PANTHER" id="PTHR35983">
    <property type="entry name" value="UPF0166 PROTEIN TM_0021"/>
    <property type="match status" value="1"/>
</dbReference>
<dbReference type="PANTHER" id="PTHR35983:SF1">
    <property type="entry name" value="UPF0166 PROTEIN TM_0021"/>
    <property type="match status" value="1"/>
</dbReference>
<dbReference type="Pfam" id="PF02641">
    <property type="entry name" value="DUF190"/>
    <property type="match status" value="1"/>
</dbReference>
<dbReference type="SUPFAM" id="SSF54913">
    <property type="entry name" value="GlnB-like"/>
    <property type="match status" value="1"/>
</dbReference>
<protein>
    <recommendedName>
        <fullName>UPF0166 protein aq_450</fullName>
    </recommendedName>
</protein>
<feature type="chain" id="PRO_0000185230" description="UPF0166 protein aq_450">
    <location>
        <begin position="1"/>
        <end position="105"/>
    </location>
</feature>
<proteinExistence type="inferred from homology"/>
<reference key="1">
    <citation type="journal article" date="1998" name="Nature">
        <title>The complete genome of the hyperthermophilic bacterium Aquifex aeolicus.</title>
        <authorList>
            <person name="Deckert G."/>
            <person name="Warren P.V."/>
            <person name="Gaasterland T."/>
            <person name="Young W.G."/>
            <person name="Lenox A.L."/>
            <person name="Graham D.E."/>
            <person name="Overbeek R."/>
            <person name="Snead M.A."/>
            <person name="Keller M."/>
            <person name="Aujay M."/>
            <person name="Huber R."/>
            <person name="Feldman R.A."/>
            <person name="Short J.M."/>
            <person name="Olsen G.J."/>
            <person name="Swanson R.V."/>
        </authorList>
    </citation>
    <scope>NUCLEOTIDE SEQUENCE [LARGE SCALE GENOMIC DNA]</scope>
    <source>
        <strain>VF5</strain>
    </source>
</reference>
<keyword id="KW-1185">Reference proteome</keyword>
<comment type="similarity">
    <text evidence="1">Belongs to the UPF0166 family.</text>
</comment>
<organism>
    <name type="scientific">Aquifex aeolicus (strain VF5)</name>
    <dbReference type="NCBI Taxonomy" id="224324"/>
    <lineage>
        <taxon>Bacteria</taxon>
        <taxon>Pseudomonadati</taxon>
        <taxon>Aquificota</taxon>
        <taxon>Aquificia</taxon>
        <taxon>Aquificales</taxon>
        <taxon>Aquificaceae</taxon>
        <taxon>Aquifex</taxon>
    </lineage>
</organism>
<name>Y450_AQUAE</name>
<gene>
    <name type="ordered locus">aq_450</name>
</gene>
<evidence type="ECO:0000305" key="1"/>
<accession>O66758</accession>
<sequence length="105" mass="12327">MRVVKKKLLRIFTSEDESFEGKPFYKYLLERAKERGLEGATVFRAIAGYGKTKEIRKHKLFQLRSSLPVVVEIIDEEEKIKRFLEEIKGKHNGLITLEDVEVIYL</sequence>